<dbReference type="EC" id="2.8.2.33"/>
<dbReference type="EMBL" id="AF026477">
    <property type="protein sequence ID" value="AAC71691.1"/>
    <property type="status" value="ALT_FRAME"/>
    <property type="molecule type" value="mRNA"/>
</dbReference>
<dbReference type="EMBL" id="AB025341">
    <property type="protein sequence ID" value="BAA83686.1"/>
    <property type="molecule type" value="Genomic_DNA"/>
</dbReference>
<dbReference type="EMBL" id="AB062423">
    <property type="protein sequence ID" value="BAB72145.1"/>
    <property type="molecule type" value="mRNA"/>
</dbReference>
<dbReference type="EMBL" id="AB011170">
    <property type="protein sequence ID" value="BAA25524.2"/>
    <property type="status" value="ALT_INIT"/>
    <property type="molecule type" value="mRNA"/>
</dbReference>
<dbReference type="EMBL" id="CR749804">
    <property type="protein sequence ID" value="CAH18664.1"/>
    <property type="molecule type" value="mRNA"/>
</dbReference>
<dbReference type="EMBL" id="AL683842">
    <property type="status" value="NOT_ANNOTATED_CDS"/>
    <property type="molecule type" value="Genomic_DNA"/>
</dbReference>
<dbReference type="EMBL" id="BC027908">
    <property type="protein sequence ID" value="AAH27908.1"/>
    <property type="molecule type" value="mRNA"/>
</dbReference>
<dbReference type="EMBL" id="BC050540">
    <property type="protein sequence ID" value="AAH50540.1"/>
    <property type="status" value="ALT_FRAME"/>
    <property type="molecule type" value="mRNA"/>
</dbReference>
<dbReference type="EMBL" id="BC075813">
    <property type="protein sequence ID" value="AAH75813.1"/>
    <property type="molecule type" value="mRNA"/>
</dbReference>
<dbReference type="CCDS" id="CCDS55731.1">
    <molecule id="Q7LFX5-2"/>
</dbReference>
<dbReference type="CCDS" id="CCDS7638.1">
    <molecule id="Q7LFX5-1"/>
</dbReference>
<dbReference type="RefSeq" id="NP_001257693.1">
    <molecule id="Q7LFX5-1"/>
    <property type="nucleotide sequence ID" value="NM_001270764.2"/>
</dbReference>
<dbReference type="RefSeq" id="NP_001257694.1">
    <molecule id="Q7LFX5-2"/>
    <property type="nucleotide sequence ID" value="NM_001270765.2"/>
</dbReference>
<dbReference type="RefSeq" id="NP_056976.2">
    <molecule id="Q7LFX5-1"/>
    <property type="nucleotide sequence ID" value="NM_015892.4"/>
</dbReference>
<dbReference type="RefSeq" id="XP_005269948.1">
    <property type="nucleotide sequence ID" value="XM_005269891.3"/>
</dbReference>
<dbReference type="RefSeq" id="XP_006717954.1">
    <molecule id="Q7LFX5-1"/>
    <property type="nucleotide sequence ID" value="XM_006717891.5"/>
</dbReference>
<dbReference type="RefSeq" id="XP_016871808.1">
    <molecule id="Q7LFX5-1"/>
    <property type="nucleotide sequence ID" value="XM_017016319.2"/>
</dbReference>
<dbReference type="RefSeq" id="XP_047281280.1">
    <molecule id="Q7LFX5-1"/>
    <property type="nucleotide sequence ID" value="XM_047425324.1"/>
</dbReference>
<dbReference type="RefSeq" id="XP_047281281.1">
    <molecule id="Q7LFX5-1"/>
    <property type="nucleotide sequence ID" value="XM_047425325.1"/>
</dbReference>
<dbReference type="RefSeq" id="XP_047281282.1">
    <molecule id="Q7LFX5-1"/>
    <property type="nucleotide sequence ID" value="XM_047425326.1"/>
</dbReference>
<dbReference type="RefSeq" id="XP_047281283.1">
    <molecule id="Q7LFX5-1"/>
    <property type="nucleotide sequence ID" value="XM_047425327.1"/>
</dbReference>
<dbReference type="RefSeq" id="XP_047281284.1">
    <molecule id="Q7LFX5-1"/>
    <property type="nucleotide sequence ID" value="XM_047425328.1"/>
</dbReference>
<dbReference type="RefSeq" id="XP_054222020.1">
    <molecule id="Q7LFX5-1"/>
    <property type="nucleotide sequence ID" value="XM_054366045.1"/>
</dbReference>
<dbReference type="RefSeq" id="XP_054222021.1">
    <molecule id="Q7LFX5-1"/>
    <property type="nucleotide sequence ID" value="XM_054366046.1"/>
</dbReference>
<dbReference type="RefSeq" id="XP_054222022.1">
    <molecule id="Q7LFX5-1"/>
    <property type="nucleotide sequence ID" value="XM_054366047.1"/>
</dbReference>
<dbReference type="RefSeq" id="XP_054222023.1">
    <molecule id="Q7LFX5-1"/>
    <property type="nucleotide sequence ID" value="XM_054366048.1"/>
</dbReference>
<dbReference type="RefSeq" id="XP_054222024.1">
    <molecule id="Q7LFX5-1"/>
    <property type="nucleotide sequence ID" value="XM_054366049.1"/>
</dbReference>
<dbReference type="RefSeq" id="XP_054222025.1">
    <molecule id="Q7LFX5-1"/>
    <property type="nucleotide sequence ID" value="XM_054366050.1"/>
</dbReference>
<dbReference type="RefSeq" id="XP_054222026.1">
    <molecule id="Q7LFX5-1"/>
    <property type="nucleotide sequence ID" value="XM_054366051.1"/>
</dbReference>
<dbReference type="BioGRID" id="119498">
    <property type="interactions" value="77"/>
</dbReference>
<dbReference type="FunCoup" id="Q7LFX5">
    <property type="interactions" value="318"/>
</dbReference>
<dbReference type="IntAct" id="Q7LFX5">
    <property type="interactions" value="26"/>
</dbReference>
<dbReference type="STRING" id="9606.ENSP00000333947"/>
<dbReference type="GlyCosmos" id="Q7LFX5">
    <property type="glycosylation" value="2 sites, 1 glycan"/>
</dbReference>
<dbReference type="GlyGen" id="Q7LFX5">
    <property type="glycosylation" value="5 sites, 1 N-linked glycan (2 sites), 1 O-linked glycan (1 site)"/>
</dbReference>
<dbReference type="iPTMnet" id="Q7LFX5"/>
<dbReference type="PhosphoSitePlus" id="Q7LFX5"/>
<dbReference type="BioMuta" id="CHST15"/>
<dbReference type="DMDM" id="74749920"/>
<dbReference type="jPOST" id="Q7LFX5"/>
<dbReference type="MassIVE" id="Q7LFX5"/>
<dbReference type="PaxDb" id="9606-ENSP00000402394"/>
<dbReference type="PeptideAtlas" id="Q7LFX5"/>
<dbReference type="ProteomicsDB" id="68858">
    <molecule id="Q7LFX5-1"/>
</dbReference>
<dbReference type="ProteomicsDB" id="68859">
    <molecule id="Q7LFX5-2"/>
</dbReference>
<dbReference type="Antibodypedia" id="2663">
    <property type="antibodies" value="69 antibodies from 23 providers"/>
</dbReference>
<dbReference type="DNASU" id="51363"/>
<dbReference type="Ensembl" id="ENST00000346248.7">
    <molecule id="Q7LFX5-1"/>
    <property type="protein sequence ID" value="ENSP00000333947.6"/>
    <property type="gene ID" value="ENSG00000182022.18"/>
</dbReference>
<dbReference type="Ensembl" id="ENST00000435907.6">
    <molecule id="Q7LFX5-1"/>
    <property type="protein sequence ID" value="ENSP00000402394.1"/>
    <property type="gene ID" value="ENSG00000182022.18"/>
</dbReference>
<dbReference type="Ensembl" id="ENST00000628426.1">
    <molecule id="Q7LFX5-2"/>
    <property type="protein sequence ID" value="ENSP00000485905.1"/>
    <property type="gene ID" value="ENSG00000182022.18"/>
</dbReference>
<dbReference type="GeneID" id="51363"/>
<dbReference type="KEGG" id="hsa:51363"/>
<dbReference type="MANE-Select" id="ENST00000435907.6">
    <property type="protein sequence ID" value="ENSP00000402394.1"/>
    <property type="RefSeq nucleotide sequence ID" value="NM_001270764.2"/>
    <property type="RefSeq protein sequence ID" value="NP_001257693.1"/>
</dbReference>
<dbReference type="UCSC" id="uc001lhm.5">
    <molecule id="Q7LFX5-1"/>
    <property type="organism name" value="human"/>
</dbReference>
<dbReference type="AGR" id="HGNC:18137"/>
<dbReference type="CTD" id="51363"/>
<dbReference type="DisGeNET" id="51363"/>
<dbReference type="GeneCards" id="CHST15"/>
<dbReference type="HGNC" id="HGNC:18137">
    <property type="gene designation" value="CHST15"/>
</dbReference>
<dbReference type="HPA" id="ENSG00000182022">
    <property type="expression patterns" value="Low tissue specificity"/>
</dbReference>
<dbReference type="MIM" id="608277">
    <property type="type" value="gene"/>
</dbReference>
<dbReference type="neXtProt" id="NX_Q7LFX5"/>
<dbReference type="OpenTargets" id="ENSG00000182022"/>
<dbReference type="PharmGKB" id="PA165548385"/>
<dbReference type="VEuPathDB" id="HostDB:ENSG00000182022"/>
<dbReference type="eggNOG" id="ENOG502QU6N">
    <property type="taxonomic scope" value="Eukaryota"/>
</dbReference>
<dbReference type="GeneTree" id="ENSGT00390000004719"/>
<dbReference type="HOGENOM" id="CLU_017703_2_1_1"/>
<dbReference type="InParanoid" id="Q7LFX5"/>
<dbReference type="OMA" id="HKQQVGC"/>
<dbReference type="OrthoDB" id="8068875at2759"/>
<dbReference type="PAN-GO" id="Q7LFX5">
    <property type="GO annotations" value="2 GO annotations based on evolutionary models"/>
</dbReference>
<dbReference type="PhylomeDB" id="Q7LFX5"/>
<dbReference type="TreeFam" id="TF333516"/>
<dbReference type="BioCyc" id="MetaCyc:HS11694-MONOMER"/>
<dbReference type="BRENDA" id="2.8.2.33">
    <property type="organism ID" value="2681"/>
</dbReference>
<dbReference type="PathwayCommons" id="Q7LFX5"/>
<dbReference type="Reactome" id="R-HSA-2022870">
    <property type="pathway name" value="Chondroitin sulfate biosynthesis"/>
</dbReference>
<dbReference type="SignaLink" id="Q7LFX5"/>
<dbReference type="BioGRID-ORCS" id="51363">
    <property type="hits" value="14 hits in 1147 CRISPR screens"/>
</dbReference>
<dbReference type="ChiTaRS" id="CHST15">
    <property type="organism name" value="human"/>
</dbReference>
<dbReference type="GeneWiki" id="GALNAC4S-6ST"/>
<dbReference type="GenomeRNAi" id="51363"/>
<dbReference type="Pharos" id="Q7LFX5">
    <property type="development level" value="Tbio"/>
</dbReference>
<dbReference type="PRO" id="PR:Q7LFX5"/>
<dbReference type="Proteomes" id="UP000005640">
    <property type="component" value="Chromosome 10"/>
</dbReference>
<dbReference type="RNAct" id="Q7LFX5">
    <property type="molecule type" value="protein"/>
</dbReference>
<dbReference type="Bgee" id="ENSG00000182022">
    <property type="expression patterns" value="Expressed in blood and 202 other cell types or tissues"/>
</dbReference>
<dbReference type="ExpressionAtlas" id="Q7LFX5">
    <property type="expression patterns" value="baseline and differential"/>
</dbReference>
<dbReference type="GO" id="GO:0000139">
    <property type="term" value="C:Golgi membrane"/>
    <property type="evidence" value="ECO:0000304"/>
    <property type="project" value="Reactome"/>
</dbReference>
<dbReference type="GO" id="GO:0016020">
    <property type="term" value="C:membrane"/>
    <property type="evidence" value="ECO:0000303"/>
    <property type="project" value="UniProtKB"/>
</dbReference>
<dbReference type="GO" id="GO:0050656">
    <property type="term" value="F:3'-phosphoadenosine 5'-phosphosulfate binding"/>
    <property type="evidence" value="ECO:0000314"/>
    <property type="project" value="UniProtKB"/>
</dbReference>
<dbReference type="GO" id="GO:0050659">
    <property type="term" value="F:N-acetylgalactosamine 4-sulfate 6-O-sulfotransferase activity"/>
    <property type="evidence" value="ECO:0000314"/>
    <property type="project" value="UniProtKB"/>
</dbReference>
<dbReference type="GO" id="GO:0019319">
    <property type="term" value="P:hexose biosynthetic process"/>
    <property type="evidence" value="ECO:0000314"/>
    <property type="project" value="UniProtKB"/>
</dbReference>
<dbReference type="FunFam" id="3.40.50.300:FF:001079">
    <property type="entry name" value="carbohydrate sulfotransferase 15"/>
    <property type="match status" value="1"/>
</dbReference>
<dbReference type="Gene3D" id="3.40.50.300">
    <property type="entry name" value="P-loop containing nucleotide triphosphate hydrolases"/>
    <property type="match status" value="1"/>
</dbReference>
<dbReference type="InterPro" id="IPR052654">
    <property type="entry name" value="CS_Sulfotransferase"/>
</dbReference>
<dbReference type="InterPro" id="IPR027417">
    <property type="entry name" value="P-loop_NTPase"/>
</dbReference>
<dbReference type="InterPro" id="IPR000863">
    <property type="entry name" value="Sulfotransferase_dom"/>
</dbReference>
<dbReference type="PANTHER" id="PTHR15723">
    <property type="entry name" value="CARBOHYDRATE SULFOTRANSFERASE 15"/>
    <property type="match status" value="1"/>
</dbReference>
<dbReference type="PANTHER" id="PTHR15723:SF0">
    <property type="entry name" value="CARBOHYDRATE SULFOTRANSFERASE 15"/>
    <property type="match status" value="1"/>
</dbReference>
<dbReference type="Pfam" id="PF00685">
    <property type="entry name" value="Sulfotransfer_1"/>
    <property type="match status" value="1"/>
</dbReference>
<dbReference type="SUPFAM" id="SSF52540">
    <property type="entry name" value="P-loop containing nucleoside triphosphate hydrolases"/>
    <property type="match status" value="1"/>
</dbReference>
<name>CHSTF_HUMAN</name>
<sequence>MRHCINCCIQLLPDGAHKQQVNCQGGPHHGHQACPTCKGENKILFRVDSKQMNLLAVLEVRTEGNENWGGFLRFKKGKRCSLVFGLIIMTLVMASYILSGAHQELLISSPFHYGGFPSNPSLMDSENPSDTKEHHHQSSVNNISYMKDYPSIKLIINSITTRIEFTTRQLPDLEDLKKQELHMFSVIPNKFLPNSKSPCWYEEFSGQNTTDPYLTNSYVLYSKRFRSTFDALRKAFWGHLAHAHGKHFRLRCLPHFYIIGQPKCGTTDLYDRLRLHPEVKFSAIKEPHWWTRKRFGIVRLRDGLRDRYPVEDYLDLFDLAAHQIHQGLQASSAKEQSKMNTIIIGEASASTMWDNNAWTFFYDNSTDGEPPFLTQDFIHAFQPNARLIVMLRDPVERLYSDYLYFASSNKSADDFHEKVTEALQLFENCMLDYSLRACVYNNTLNNAMPVRLQVGLYAVYLLDWLSVFDKQQFLILRLEDHASNVKYTMHKVFQFLNLGPLSEKQEALMTKSPASNARRPEDRNLGPMWPITQKILRDFYRPFNARLAQVLADEAFAWKTT</sequence>
<keyword id="KW-0025">Alternative splicing</keyword>
<keyword id="KW-1015">Disulfide bond</keyword>
<keyword id="KW-0325">Glycoprotein</keyword>
<keyword id="KW-0333">Golgi apparatus</keyword>
<keyword id="KW-0472">Membrane</keyword>
<keyword id="KW-1267">Proteomics identification</keyword>
<keyword id="KW-1185">Reference proteome</keyword>
<keyword id="KW-0735">Signal-anchor</keyword>
<keyword id="KW-0808">Transferase</keyword>
<keyword id="KW-0812">Transmembrane</keyword>
<keyword id="KW-1133">Transmembrane helix</keyword>
<comment type="function">
    <text evidence="4 5">Sulfotransferase that transfers sulfate from 3'-phosphoadenosine 5'-phosphosulfate (PAPS) to the C-6 hydroxyl group of the GalNAc 4-sulfate residue of chondroitin sulfate A and forms chondroitin sulfate E containing GlcA-GalNAc(4,6-SO(4)) repeating units. It also transfers sulfate to a unique non-reducing terminal sequence, GalNAc(4SO4)-GlcA(2SO4)-GalNAc(6SO4), to yield a highly sulfated structure similar to the structure found in thrombomodulin chondroitin sulfate. May also act as a B-cell receptor involved in BCR ligation-mediated early activation that mediate regulatory signals key to B-cell development and/or regulation of B-cell-specific RAG expression; however such results are unclear in vivo.</text>
</comment>
<comment type="catalytic activity">
    <reaction evidence="5">
        <text>dermatan 4'-sulfate + n 3'-phosphoadenylyl sulfate = dermatan 4',6'-bissulfate + n adenosine 3',5'-bisphosphate + n H(+)</text>
        <dbReference type="Rhea" id="RHEA:54304"/>
        <dbReference type="Rhea" id="RHEA-COMP:9965"/>
        <dbReference type="Rhea" id="RHEA-COMP:13850"/>
        <dbReference type="ChEBI" id="CHEBI:15378"/>
        <dbReference type="ChEBI" id="CHEBI:58339"/>
        <dbReference type="ChEBI" id="CHEBI:58343"/>
        <dbReference type="ChEBI" id="CHEBI:58465"/>
        <dbReference type="ChEBI" id="CHEBI:138121"/>
        <dbReference type="EC" id="2.8.2.33"/>
    </reaction>
</comment>
<comment type="catalytic activity">
    <reaction evidence="5">
        <text>chondroitin 4'-sulfate + n 3'-phosphoadenylyl sulfate = chondroitin 4',6'-bissulfate + n adenosine 3',5'-bisphosphate + n H(+)</text>
        <dbReference type="Rhea" id="RHEA:54300"/>
        <dbReference type="Rhea" id="RHEA-COMP:9829"/>
        <dbReference type="Rhea" id="RHEA-COMP:13849"/>
        <dbReference type="ChEBI" id="CHEBI:15378"/>
        <dbReference type="ChEBI" id="CHEBI:58339"/>
        <dbReference type="ChEBI" id="CHEBI:58343"/>
        <dbReference type="ChEBI" id="CHEBI:58422"/>
        <dbReference type="ChEBI" id="CHEBI:138112"/>
        <dbReference type="EC" id="2.8.2.33"/>
    </reaction>
</comment>
<comment type="cofactor">
    <cofactor evidence="1">
        <name>a divalent metal cation</name>
        <dbReference type="ChEBI" id="CHEBI:60240"/>
    </cofactor>
</comment>
<comment type="cofactor">
    <cofactor evidence="1">
        <name>glutathione</name>
        <dbReference type="ChEBI" id="CHEBI:57925"/>
    </cofactor>
</comment>
<comment type="activity regulation">
    <text evidence="6">Inhibited by phenyl beta-GalNAc(4,6-SO(4)).</text>
</comment>
<comment type="subunit">
    <text evidence="3 9">Homodimer; disulfide-linked (Potential). The relevance of homodimerization is however unsure. May interact with phosphorylated proteins in resting B-cells, including HCK.</text>
</comment>
<comment type="interaction">
    <interactant intactId="EBI-11123530">
        <id>Q7LFX5</id>
    </interactant>
    <interactant intactId="EBI-355947">
        <id>P27824</id>
        <label>CANX</label>
    </interactant>
    <organismsDiffer>false</organismsDiffer>
    <experiments>3</experiments>
</comment>
<comment type="interaction">
    <interactant intactId="EBI-11123530">
        <id>Q7LFX5</id>
    </interactant>
    <interactant intactId="EBI-16439278">
        <id>Q6FHY5</id>
        <label>MEOX2</label>
    </interactant>
    <organismsDiffer>false</organismsDiffer>
    <experiments>3</experiments>
</comment>
<comment type="subcellular location">
    <subcellularLocation>
        <location evidence="10">Golgi apparatus membrane</location>
        <topology evidence="10">Single-pass type II membrane protein</topology>
    </subcellularLocation>
    <text>A small fraction may also be present at the cell surface, where it acts as a B-cell receptor.</text>
</comment>
<comment type="alternative products">
    <event type="alternative splicing"/>
    <isoform>
        <id>Q7LFX5-1</id>
        <name>1</name>
        <sequence type="displayed"/>
    </isoform>
    <isoform>
        <id>Q7LFX5-2</id>
        <name>2</name>
        <sequence type="described" ref="VSP_017387"/>
    </isoform>
</comment>
<comment type="tissue specificity">
    <text evidence="7">Expressed in B-cell-enriched tissues but not in fetal or adult thymus. Expressed in fetal and adult spleen, lymph node, tonsil, bone marrow and peripheral leukocytes. Not expressed in T-cells. In pro-B, pre-B, and mature B-cell lines, it colocalizes with RAG1.</text>
</comment>
<comment type="PTM">
    <text evidence="3">Glycosylated.</text>
</comment>
<comment type="similarity">
    <text evidence="9">Belongs to the sulfotransferase 1 family.</text>
</comment>
<comment type="sequence caution" evidence="9">
    <conflict type="frameshift">
        <sequence resource="EMBL-CDS" id="AAC71691"/>
    </conflict>
</comment>
<comment type="sequence caution" evidence="9">
    <conflict type="frameshift">
        <sequence resource="EMBL-CDS" id="AAH50540"/>
    </conflict>
</comment>
<comment type="sequence caution" evidence="9">
    <conflict type="erroneous initiation">
        <sequence resource="EMBL-CDS" id="BAA25524"/>
    </conflict>
</comment>
<proteinExistence type="evidence at protein level"/>
<evidence type="ECO:0000250" key="1"/>
<evidence type="ECO:0000255" key="2"/>
<evidence type="ECO:0000269" key="3">
    <source>
    </source>
</evidence>
<evidence type="ECO:0000269" key="4">
    <source>
    </source>
</evidence>
<evidence type="ECO:0000269" key="5">
    <source>
    </source>
</evidence>
<evidence type="ECO:0000269" key="6">
    <source>
    </source>
</evidence>
<evidence type="ECO:0000269" key="7">
    <source>
    </source>
</evidence>
<evidence type="ECO:0000303" key="8">
    <source>
    </source>
</evidence>
<evidence type="ECO:0000305" key="9"/>
<evidence type="ECO:0000305" key="10">
    <source>
    </source>
</evidence>
<organism>
    <name type="scientific">Homo sapiens</name>
    <name type="common">Human</name>
    <dbReference type="NCBI Taxonomy" id="9606"/>
    <lineage>
        <taxon>Eukaryota</taxon>
        <taxon>Metazoa</taxon>
        <taxon>Chordata</taxon>
        <taxon>Craniata</taxon>
        <taxon>Vertebrata</taxon>
        <taxon>Euteleostomi</taxon>
        <taxon>Mammalia</taxon>
        <taxon>Eutheria</taxon>
        <taxon>Euarchontoglires</taxon>
        <taxon>Primates</taxon>
        <taxon>Haplorrhini</taxon>
        <taxon>Catarrhini</taxon>
        <taxon>Hominidae</taxon>
        <taxon>Homo</taxon>
    </lineage>
</organism>
<protein>
    <recommendedName>
        <fullName>Carbohydrate sulfotransferase 15</fullName>
        <ecNumber>2.8.2.33</ecNumber>
    </recommendedName>
    <alternativeName>
        <fullName>B-cell RAG-associated gene protein</fullName>
        <shortName>hBRAG</shortName>
    </alternativeName>
    <alternativeName>
        <fullName>N-acetylgalactosamine 4-sulfate 6-O-sulfotransferase</fullName>
        <shortName>GalNAc4S-6ST</shortName>
    </alternativeName>
</protein>
<feature type="chain" id="PRO_0000225623" description="Carbohydrate sulfotransferase 15">
    <location>
        <begin position="1"/>
        <end position="561"/>
    </location>
</feature>
<feature type="topological domain" description="Cytoplasmic" evidence="2">
    <location>
        <begin position="1"/>
        <end position="80"/>
    </location>
</feature>
<feature type="transmembrane region" description="Helical; Signal-anchor for type II membrane protein" evidence="2">
    <location>
        <begin position="81"/>
        <end position="101"/>
    </location>
</feature>
<feature type="topological domain" description="Lumenal" evidence="2">
    <location>
        <begin position="102"/>
        <end position="561"/>
    </location>
</feature>
<feature type="binding site" evidence="1">
    <location>
        <begin position="263"/>
        <end position="267"/>
    </location>
    <ligand>
        <name>3'-phosphoadenylyl sulfate</name>
        <dbReference type="ChEBI" id="CHEBI:58339"/>
    </ligand>
</feature>
<feature type="binding site" evidence="1">
    <location>
        <position position="392"/>
    </location>
    <ligand>
        <name>3'-phosphoadenylyl sulfate</name>
        <dbReference type="ChEBI" id="CHEBI:58339"/>
    </ligand>
</feature>
<feature type="binding site" evidence="1">
    <location>
        <position position="400"/>
    </location>
    <ligand>
        <name>3'-phosphoadenylyl sulfate</name>
        <dbReference type="ChEBI" id="CHEBI:58339"/>
    </ligand>
</feature>
<feature type="glycosylation site" description="N-linked (GlcNAc...) asparagine" evidence="2">
    <location>
        <position position="364"/>
    </location>
</feature>
<feature type="splice variant" id="VSP_017387" description="In isoform 2." evidence="8">
    <original>RLQVGLYAVYLLDWLSVFDKQQFLILRLEDHASNVKYTMHKVFQFLNLGPLSEKQEALMTKSPASNARRPEDRNLGPMWPITQKILRDFYRPFNARLAQVLADEAFAWKTT</original>
    <variation>CTPPPRTPRAGPWQKELVCCYYASGIVGLRFSIGTERSVLMCKCCSPLFMDVKAEN</variation>
    <location>
        <begin position="451"/>
        <end position="561"/>
    </location>
</feature>
<reference key="1">
    <citation type="journal article" date="1998" name="Eur. J. Immunol.">
        <title>hBRAG, a novel B cell lineage cDNA encoding a type II transmembrane glycoprotein potentially involved in the regulation of recombination activating gene 1 (RAG1).</title>
        <authorList>
            <person name="Verkoczy L.K."/>
            <person name="Marsden P.A."/>
            <person name="Berinstein N.L."/>
        </authorList>
    </citation>
    <scope>NUCLEOTIDE SEQUENCE [MRNA] (ISOFORM 1)</scope>
    <scope>TISSUE SPECIFICITY</scope>
    <source>
        <tissue>Pre-B cell</tissue>
    </source>
</reference>
<reference key="2">
    <citation type="journal article" date="2000" name="Oncol. Rep.">
        <title>Structure, expression and mutational analysis of the hBRAG gene on 10q in the frequently deleted region in human endometrial cancer.</title>
        <authorList>
            <person name="Yuki M."/>
            <person name="Yoshinaga K."/>
            <person name="Yamakawa H."/>
            <person name="Sakurada K."/>
            <person name="Sato S."/>
            <person name="Yajima A."/>
            <person name="Horii A."/>
        </authorList>
    </citation>
    <scope>NUCLEOTIDE SEQUENCE [GENOMIC DNA]</scope>
</reference>
<reference key="3">
    <citation type="journal article" date="2001" name="J. Biol. Chem.">
        <title>Human N-acetylgalactosamine 4-sulfate 6-O-sulfotransferase cDNA is related to human B cell recombination activating gene-associated gene.</title>
        <authorList>
            <person name="Ohtake S."/>
            <person name="Ito Y."/>
            <person name="Fukuta M."/>
            <person name="Habuchi O."/>
        </authorList>
    </citation>
    <scope>NUCLEOTIDE SEQUENCE [MRNA] (ISOFORM 1)</scope>
    <scope>FUNCTION</scope>
    <source>
        <tissue>Brain</tissue>
    </source>
</reference>
<reference key="4">
    <citation type="journal article" date="1998" name="DNA Res.">
        <title>Prediction of the coding sequences of unidentified human genes. IX. The complete sequences of 100 new cDNA clones from brain which can code for large proteins in vitro.</title>
        <authorList>
            <person name="Nagase T."/>
            <person name="Ishikawa K."/>
            <person name="Miyajima N."/>
            <person name="Tanaka A."/>
            <person name="Kotani H."/>
            <person name="Nomura N."/>
            <person name="Ohara O."/>
        </authorList>
    </citation>
    <scope>NUCLEOTIDE SEQUENCE [LARGE SCALE MRNA] (ISOFORM 1)</scope>
    <source>
        <tissue>Brain</tissue>
    </source>
</reference>
<reference key="5">
    <citation type="journal article" date="2007" name="BMC Genomics">
        <title>The full-ORF clone resource of the German cDNA consortium.</title>
        <authorList>
            <person name="Bechtel S."/>
            <person name="Rosenfelder H."/>
            <person name="Duda A."/>
            <person name="Schmidt C.P."/>
            <person name="Ernst U."/>
            <person name="Wellenreuther R."/>
            <person name="Mehrle A."/>
            <person name="Schuster C."/>
            <person name="Bahr A."/>
            <person name="Bloecker H."/>
            <person name="Heubner D."/>
            <person name="Hoerlein A."/>
            <person name="Michel G."/>
            <person name="Wedler H."/>
            <person name="Koehrer K."/>
            <person name="Ottenwaelder B."/>
            <person name="Poustka A."/>
            <person name="Wiemann S."/>
            <person name="Schupp I."/>
        </authorList>
    </citation>
    <scope>NUCLEOTIDE SEQUENCE [LARGE SCALE MRNA] (ISOFORM 1)</scope>
</reference>
<reference key="6">
    <citation type="journal article" date="2004" name="Nature">
        <title>The DNA sequence and comparative analysis of human chromosome 10.</title>
        <authorList>
            <person name="Deloukas P."/>
            <person name="Earthrowl M.E."/>
            <person name="Grafham D.V."/>
            <person name="Rubenfield M."/>
            <person name="French L."/>
            <person name="Steward C.A."/>
            <person name="Sims S.K."/>
            <person name="Jones M.C."/>
            <person name="Searle S."/>
            <person name="Scott C."/>
            <person name="Howe K."/>
            <person name="Hunt S.E."/>
            <person name="Andrews T.D."/>
            <person name="Gilbert J.G.R."/>
            <person name="Swarbreck D."/>
            <person name="Ashurst J.L."/>
            <person name="Taylor A."/>
            <person name="Battles J."/>
            <person name="Bird C.P."/>
            <person name="Ainscough R."/>
            <person name="Almeida J.P."/>
            <person name="Ashwell R.I.S."/>
            <person name="Ambrose K.D."/>
            <person name="Babbage A.K."/>
            <person name="Bagguley C.L."/>
            <person name="Bailey J."/>
            <person name="Banerjee R."/>
            <person name="Bates K."/>
            <person name="Beasley H."/>
            <person name="Bray-Allen S."/>
            <person name="Brown A.J."/>
            <person name="Brown J.Y."/>
            <person name="Burford D.C."/>
            <person name="Burrill W."/>
            <person name="Burton J."/>
            <person name="Cahill P."/>
            <person name="Camire D."/>
            <person name="Carter N.P."/>
            <person name="Chapman J.C."/>
            <person name="Clark S.Y."/>
            <person name="Clarke G."/>
            <person name="Clee C.M."/>
            <person name="Clegg S."/>
            <person name="Corby N."/>
            <person name="Coulson A."/>
            <person name="Dhami P."/>
            <person name="Dutta I."/>
            <person name="Dunn M."/>
            <person name="Faulkner L."/>
            <person name="Frankish A."/>
            <person name="Frankland J.A."/>
            <person name="Garner P."/>
            <person name="Garnett J."/>
            <person name="Gribble S."/>
            <person name="Griffiths C."/>
            <person name="Grocock R."/>
            <person name="Gustafson E."/>
            <person name="Hammond S."/>
            <person name="Harley J.L."/>
            <person name="Hart E."/>
            <person name="Heath P.D."/>
            <person name="Ho T.P."/>
            <person name="Hopkins B."/>
            <person name="Horne J."/>
            <person name="Howden P.J."/>
            <person name="Huckle E."/>
            <person name="Hynds C."/>
            <person name="Johnson C."/>
            <person name="Johnson D."/>
            <person name="Kana A."/>
            <person name="Kay M."/>
            <person name="Kimberley A.M."/>
            <person name="Kershaw J.K."/>
            <person name="Kokkinaki M."/>
            <person name="Laird G.K."/>
            <person name="Lawlor S."/>
            <person name="Lee H.M."/>
            <person name="Leongamornlert D.A."/>
            <person name="Laird G."/>
            <person name="Lloyd C."/>
            <person name="Lloyd D.M."/>
            <person name="Loveland J."/>
            <person name="Lovell J."/>
            <person name="McLaren S."/>
            <person name="McLay K.E."/>
            <person name="McMurray A."/>
            <person name="Mashreghi-Mohammadi M."/>
            <person name="Matthews L."/>
            <person name="Milne S."/>
            <person name="Nickerson T."/>
            <person name="Nguyen M."/>
            <person name="Overton-Larty E."/>
            <person name="Palmer S.A."/>
            <person name="Pearce A.V."/>
            <person name="Peck A.I."/>
            <person name="Pelan S."/>
            <person name="Phillimore B."/>
            <person name="Porter K."/>
            <person name="Rice C.M."/>
            <person name="Rogosin A."/>
            <person name="Ross M.T."/>
            <person name="Sarafidou T."/>
            <person name="Sehra H.K."/>
            <person name="Shownkeen R."/>
            <person name="Skuce C.D."/>
            <person name="Smith M."/>
            <person name="Standring L."/>
            <person name="Sycamore N."/>
            <person name="Tester J."/>
            <person name="Thorpe A."/>
            <person name="Torcasso W."/>
            <person name="Tracey A."/>
            <person name="Tromans A."/>
            <person name="Tsolas J."/>
            <person name="Wall M."/>
            <person name="Walsh J."/>
            <person name="Wang H."/>
            <person name="Weinstock K."/>
            <person name="West A.P."/>
            <person name="Willey D.L."/>
            <person name="Whitehead S.L."/>
            <person name="Wilming L."/>
            <person name="Wray P.W."/>
            <person name="Young L."/>
            <person name="Chen Y."/>
            <person name="Lovering R.C."/>
            <person name="Moschonas N.K."/>
            <person name="Siebert R."/>
            <person name="Fechtel K."/>
            <person name="Bentley D."/>
            <person name="Durbin R.M."/>
            <person name="Hubbard T."/>
            <person name="Doucette-Stamm L."/>
            <person name="Beck S."/>
            <person name="Smith D.R."/>
            <person name="Rogers J."/>
        </authorList>
    </citation>
    <scope>NUCLEOTIDE SEQUENCE [LARGE SCALE GENOMIC DNA]</scope>
</reference>
<reference key="7">
    <citation type="journal article" date="2004" name="Genome Res.">
        <title>The status, quality, and expansion of the NIH full-length cDNA project: the Mammalian Gene Collection (MGC).</title>
        <authorList>
            <consortium name="The MGC Project Team"/>
        </authorList>
    </citation>
    <scope>NUCLEOTIDE SEQUENCE [LARGE SCALE MRNA] (ISOFORMS 1 AND 2)</scope>
    <source>
        <tissue>Blood</tissue>
        <tissue>Duodenum</tissue>
        <tissue>Lung</tissue>
    </source>
</reference>
<reference key="8">
    <citation type="journal article" date="2000" name="J. Biol. Chem.">
        <title>Characterization of the human B cell RAG-associated gene, hBRAG, as a B cell receptor signal-enhancing glycoprotein dimer that associates with phosphorylated proteins in resting B cells.</title>
        <authorList>
            <person name="Verkoczy L.K."/>
            <person name="Guinn B.-A."/>
            <person name="Berinstein N.L."/>
        </authorList>
    </citation>
    <scope>POSSIBLE FUNCTION</scope>
    <scope>SUBUNIT</scope>
    <scope>SUBCELLULAR LOCATION</scope>
    <scope>GLYCOSYLATION</scope>
    <scope>DISULFIDE BOND</scope>
    <scope>INTERACTION WITH HCK</scope>
</reference>
<reference key="9">
    <citation type="journal article" date="2003" name="J. Biol. Chem.">
        <title>A unique nonreducing terminal modification of chondroitin sulfate by N-acetylgalactosamine 4-sulfate 6-o-sulfotransferase.</title>
        <authorList>
            <person name="Ohtake S."/>
            <person name="Kimata K."/>
            <person name="Habuchi O."/>
        </authorList>
    </citation>
    <scope>FUNCTION</scope>
    <scope>CATALYTIC ACTIVITY</scope>
</reference>
<reference key="10">
    <citation type="journal article" date="2005" name="Carbohydr. Res.">
        <title>Synthesis of sulfated phenyl 2-acetamido-2-deoxy-D--D-galactopyranosides. 4-O-Sulfated phenyl 2-acetamido-2-deoxy-beta-D-galactopyranoside is a competitive acceptor that decreases sulfation of chondroitin sulfate by N-acetylgalactosamine 4-sulfate 6-O-sulfotransferase.</title>
        <authorList>
            <person name="Sawada T."/>
            <person name="Fujii S."/>
            <person name="Nakano H."/>
            <person name="Ohtake S."/>
            <person name="Kimata K."/>
            <person name="Habuchi O."/>
        </authorList>
    </citation>
    <scope>ACTIVITY REGULATION</scope>
</reference>
<reference key="11">
    <citation type="journal article" date="2006" name="Cell">
        <title>Global, in vivo, and site-specific phosphorylation dynamics in signaling networks.</title>
        <authorList>
            <person name="Olsen J.V."/>
            <person name="Blagoev B."/>
            <person name="Gnad F."/>
            <person name="Macek B."/>
            <person name="Kumar C."/>
            <person name="Mortensen P."/>
            <person name="Mann M."/>
        </authorList>
    </citation>
    <scope>IDENTIFICATION BY MASS SPECTROMETRY [LARGE SCALE ANALYSIS]</scope>
    <source>
        <tissue>Cervix carcinoma</tissue>
    </source>
</reference>
<gene>
    <name type="primary">CHST15</name>
    <name type="synonym">BRAG</name>
    <name type="synonym">GALNAC4S6ST</name>
    <name type="synonym">KIAA0598</name>
</gene>
<accession>Q7LFX5</accession>
<accession>O60338</accession>
<accession>O60474</accession>
<accession>Q86VM4</accession>